<gene>
    <name evidence="1" type="primary">rplM</name>
    <name type="ordered locus">NAMH_1407</name>
</gene>
<organism>
    <name type="scientific">Nautilia profundicola (strain ATCC BAA-1463 / DSM 18972 / AmH)</name>
    <dbReference type="NCBI Taxonomy" id="598659"/>
    <lineage>
        <taxon>Bacteria</taxon>
        <taxon>Pseudomonadati</taxon>
        <taxon>Campylobacterota</taxon>
        <taxon>Epsilonproteobacteria</taxon>
        <taxon>Nautiliales</taxon>
        <taxon>Nautiliaceae</taxon>
        <taxon>Nautilia</taxon>
    </lineage>
</organism>
<comment type="function">
    <text evidence="1">This protein is one of the early assembly proteins of the 50S ribosomal subunit, although it is not seen to bind rRNA by itself. It is important during the early stages of 50S assembly.</text>
</comment>
<comment type="subunit">
    <text evidence="1">Part of the 50S ribosomal subunit.</text>
</comment>
<comment type="similarity">
    <text evidence="1">Belongs to the universal ribosomal protein uL13 family.</text>
</comment>
<keyword id="KW-0687">Ribonucleoprotein</keyword>
<keyword id="KW-0689">Ribosomal protein</keyword>
<sequence>MKFTKSIREEDVKRDWILIDAKDKVFGRIITEIATILRGKHKPYYTPHVDCGDYVVVINADKVKFSTSKKLEDKYYKHTGYFGNLKEETVEKLLNNNPEKLFKLATRGMLPKTKLGRKMLKKLKVYAGENHPHTAQVKGN</sequence>
<accession>B9L611</accession>
<evidence type="ECO:0000255" key="1">
    <source>
        <dbReference type="HAMAP-Rule" id="MF_01366"/>
    </source>
</evidence>
<evidence type="ECO:0000305" key="2"/>
<name>RL13_NAUPA</name>
<dbReference type="EMBL" id="CP001279">
    <property type="protein sequence ID" value="ACM92126.1"/>
    <property type="molecule type" value="Genomic_DNA"/>
</dbReference>
<dbReference type="RefSeq" id="WP_012663498.1">
    <property type="nucleotide sequence ID" value="NC_012115.1"/>
</dbReference>
<dbReference type="SMR" id="B9L611"/>
<dbReference type="STRING" id="598659.NAMH_1407"/>
<dbReference type="KEGG" id="nam:NAMH_1407"/>
<dbReference type="eggNOG" id="COG0102">
    <property type="taxonomic scope" value="Bacteria"/>
</dbReference>
<dbReference type="HOGENOM" id="CLU_082184_2_2_7"/>
<dbReference type="OrthoDB" id="9801330at2"/>
<dbReference type="Proteomes" id="UP000000448">
    <property type="component" value="Chromosome"/>
</dbReference>
<dbReference type="GO" id="GO:0022625">
    <property type="term" value="C:cytosolic large ribosomal subunit"/>
    <property type="evidence" value="ECO:0007669"/>
    <property type="project" value="TreeGrafter"/>
</dbReference>
<dbReference type="GO" id="GO:0003729">
    <property type="term" value="F:mRNA binding"/>
    <property type="evidence" value="ECO:0007669"/>
    <property type="project" value="TreeGrafter"/>
</dbReference>
<dbReference type="GO" id="GO:0003735">
    <property type="term" value="F:structural constituent of ribosome"/>
    <property type="evidence" value="ECO:0007669"/>
    <property type="project" value="InterPro"/>
</dbReference>
<dbReference type="GO" id="GO:0017148">
    <property type="term" value="P:negative regulation of translation"/>
    <property type="evidence" value="ECO:0007669"/>
    <property type="project" value="TreeGrafter"/>
</dbReference>
<dbReference type="GO" id="GO:0006412">
    <property type="term" value="P:translation"/>
    <property type="evidence" value="ECO:0007669"/>
    <property type="project" value="UniProtKB-UniRule"/>
</dbReference>
<dbReference type="CDD" id="cd00392">
    <property type="entry name" value="Ribosomal_L13"/>
    <property type="match status" value="1"/>
</dbReference>
<dbReference type="Gene3D" id="3.90.1180.10">
    <property type="entry name" value="Ribosomal protein L13"/>
    <property type="match status" value="1"/>
</dbReference>
<dbReference type="HAMAP" id="MF_01366">
    <property type="entry name" value="Ribosomal_uL13"/>
    <property type="match status" value="1"/>
</dbReference>
<dbReference type="InterPro" id="IPR005822">
    <property type="entry name" value="Ribosomal_uL13"/>
</dbReference>
<dbReference type="InterPro" id="IPR005823">
    <property type="entry name" value="Ribosomal_uL13_bac-type"/>
</dbReference>
<dbReference type="InterPro" id="IPR036899">
    <property type="entry name" value="Ribosomal_uL13_sf"/>
</dbReference>
<dbReference type="NCBIfam" id="TIGR01066">
    <property type="entry name" value="rplM_bact"/>
    <property type="match status" value="1"/>
</dbReference>
<dbReference type="PANTHER" id="PTHR11545:SF2">
    <property type="entry name" value="LARGE RIBOSOMAL SUBUNIT PROTEIN UL13M"/>
    <property type="match status" value="1"/>
</dbReference>
<dbReference type="PANTHER" id="PTHR11545">
    <property type="entry name" value="RIBOSOMAL PROTEIN L13"/>
    <property type="match status" value="1"/>
</dbReference>
<dbReference type="Pfam" id="PF00572">
    <property type="entry name" value="Ribosomal_L13"/>
    <property type="match status" value="1"/>
</dbReference>
<dbReference type="PIRSF" id="PIRSF002181">
    <property type="entry name" value="Ribosomal_L13"/>
    <property type="match status" value="1"/>
</dbReference>
<dbReference type="SUPFAM" id="SSF52161">
    <property type="entry name" value="Ribosomal protein L13"/>
    <property type="match status" value="1"/>
</dbReference>
<reference key="1">
    <citation type="journal article" date="2009" name="PLoS Genet.">
        <title>Adaptations to submarine hydrothermal environments exemplified by the genome of Nautilia profundicola.</title>
        <authorList>
            <person name="Campbell B.J."/>
            <person name="Smith J.L."/>
            <person name="Hanson T.E."/>
            <person name="Klotz M.G."/>
            <person name="Stein L.Y."/>
            <person name="Lee C.K."/>
            <person name="Wu D."/>
            <person name="Robinson J.M."/>
            <person name="Khouri H.M."/>
            <person name="Eisen J.A."/>
            <person name="Cary S.C."/>
        </authorList>
    </citation>
    <scope>NUCLEOTIDE SEQUENCE [LARGE SCALE GENOMIC DNA]</scope>
    <source>
        <strain>ATCC BAA-1463 / DSM 18972 / AmH</strain>
    </source>
</reference>
<proteinExistence type="inferred from homology"/>
<protein>
    <recommendedName>
        <fullName evidence="1">Large ribosomal subunit protein uL13</fullName>
    </recommendedName>
    <alternativeName>
        <fullName evidence="2">50S ribosomal protein L13</fullName>
    </alternativeName>
</protein>
<feature type="chain" id="PRO_1000166878" description="Large ribosomal subunit protein uL13">
    <location>
        <begin position="1"/>
        <end position="140"/>
    </location>
</feature>